<dbReference type="EMBL" id="AF431813">
    <property type="protein sequence ID" value="AAN63590.1"/>
    <property type="molecule type" value="mRNA"/>
</dbReference>
<dbReference type="SMR" id="Q8AYI2"/>
<dbReference type="GO" id="GO:0005634">
    <property type="term" value="C:nucleus"/>
    <property type="evidence" value="ECO:0007669"/>
    <property type="project" value="UniProtKB-SubCell"/>
</dbReference>
<dbReference type="GO" id="GO:0003707">
    <property type="term" value="F:nuclear steroid receptor activity"/>
    <property type="evidence" value="ECO:0007669"/>
    <property type="project" value="InterPro"/>
</dbReference>
<dbReference type="GO" id="GO:0043565">
    <property type="term" value="F:sequence-specific DNA binding"/>
    <property type="evidence" value="ECO:0007669"/>
    <property type="project" value="InterPro"/>
</dbReference>
<dbReference type="GO" id="GO:0005496">
    <property type="term" value="F:steroid binding"/>
    <property type="evidence" value="ECO:0007669"/>
    <property type="project" value="UniProtKB-KW"/>
</dbReference>
<dbReference type="GO" id="GO:0008270">
    <property type="term" value="F:zinc ion binding"/>
    <property type="evidence" value="ECO:0007669"/>
    <property type="project" value="UniProtKB-KW"/>
</dbReference>
<dbReference type="CDD" id="cd07172">
    <property type="entry name" value="NR_DBD_GR_PR"/>
    <property type="match status" value="1"/>
</dbReference>
<dbReference type="CDD" id="cd07074">
    <property type="entry name" value="NR_LBD_PR"/>
    <property type="match status" value="1"/>
</dbReference>
<dbReference type="FunFam" id="1.10.565.10:FF:000004">
    <property type="entry name" value="Androgen receptor variant"/>
    <property type="match status" value="1"/>
</dbReference>
<dbReference type="Gene3D" id="3.30.50.10">
    <property type="entry name" value="Erythroid Transcription Factor GATA-1, subunit A"/>
    <property type="match status" value="1"/>
</dbReference>
<dbReference type="Gene3D" id="1.10.565.10">
    <property type="entry name" value="Retinoid X Receptor"/>
    <property type="match status" value="1"/>
</dbReference>
<dbReference type="InterPro" id="IPR035500">
    <property type="entry name" value="NHR-like_dom_sf"/>
</dbReference>
<dbReference type="InterPro" id="IPR000536">
    <property type="entry name" value="Nucl_hrmn_rcpt_lig-bd"/>
</dbReference>
<dbReference type="InterPro" id="IPR050200">
    <property type="entry name" value="Nuclear_hormone_rcpt_NR3"/>
</dbReference>
<dbReference type="InterPro" id="IPR001723">
    <property type="entry name" value="Nuclear_hrmn_rcpt"/>
</dbReference>
<dbReference type="InterPro" id="IPR000128">
    <property type="entry name" value="Progest_rcpt"/>
</dbReference>
<dbReference type="InterPro" id="IPR001628">
    <property type="entry name" value="Znf_hrmn_rcpt"/>
</dbReference>
<dbReference type="InterPro" id="IPR013088">
    <property type="entry name" value="Znf_NHR/GATA"/>
</dbReference>
<dbReference type="PANTHER" id="PTHR48092">
    <property type="entry name" value="KNIRPS-RELATED PROTEIN-RELATED"/>
    <property type="match status" value="1"/>
</dbReference>
<dbReference type="Pfam" id="PF00104">
    <property type="entry name" value="Hormone_recep"/>
    <property type="match status" value="1"/>
</dbReference>
<dbReference type="Pfam" id="PF02161">
    <property type="entry name" value="Prog_receptor"/>
    <property type="match status" value="1"/>
</dbReference>
<dbReference type="Pfam" id="PF00105">
    <property type="entry name" value="zf-C4"/>
    <property type="match status" value="1"/>
</dbReference>
<dbReference type="PRINTS" id="PR00398">
    <property type="entry name" value="STRDHORMONER"/>
</dbReference>
<dbReference type="PRINTS" id="PR00047">
    <property type="entry name" value="STROIDFINGER"/>
</dbReference>
<dbReference type="SMART" id="SM00430">
    <property type="entry name" value="HOLI"/>
    <property type="match status" value="1"/>
</dbReference>
<dbReference type="SMART" id="SM00399">
    <property type="entry name" value="ZnF_C4"/>
    <property type="match status" value="1"/>
</dbReference>
<dbReference type="SUPFAM" id="SSF57716">
    <property type="entry name" value="Glucocorticoid receptor-like (DNA-binding domain)"/>
    <property type="match status" value="1"/>
</dbReference>
<dbReference type="SUPFAM" id="SSF48508">
    <property type="entry name" value="Nuclear receptor ligand-binding domain"/>
    <property type="match status" value="1"/>
</dbReference>
<dbReference type="PROSITE" id="PS51843">
    <property type="entry name" value="NR_LBD"/>
    <property type="match status" value="1"/>
</dbReference>
<dbReference type="PROSITE" id="PS00031">
    <property type="entry name" value="NUCLEAR_REC_DBD_1"/>
    <property type="match status" value="1"/>
</dbReference>
<dbReference type="PROSITE" id="PS51030">
    <property type="entry name" value="NUCLEAR_REC_DBD_2"/>
    <property type="match status" value="1"/>
</dbReference>
<feature type="chain" id="PRO_0000053700" description="Progesterone receptor">
    <location>
        <begin position="1"/>
        <end position="711"/>
    </location>
</feature>
<feature type="domain" description="NR LBD" evidence="2">
    <location>
        <begin position="457"/>
        <end position="691"/>
    </location>
</feature>
<feature type="DNA-binding region" description="Nuclear receptor" evidence="1">
    <location>
        <begin position="348"/>
        <end position="420"/>
    </location>
</feature>
<feature type="zinc finger region" description="NR C4-type" evidence="1">
    <location>
        <begin position="348"/>
        <end position="368"/>
    </location>
</feature>
<feature type="zinc finger region" description="NR C4-type" evidence="1">
    <location>
        <begin position="384"/>
        <end position="408"/>
    </location>
</feature>
<feature type="region of interest" description="Modulating, Pro-Rich">
    <location>
        <begin position="1"/>
        <end position="347"/>
    </location>
</feature>
<protein>
    <recommendedName>
        <fullName>Progesterone receptor</fullName>
        <shortName>PR</shortName>
    </recommendedName>
    <alternativeName>
        <fullName>Nuclear receptor subfamily 3 group C member 3</fullName>
    </alternativeName>
    <alternativeName>
        <fullName>dyPR</fullName>
    </alternativeName>
</protein>
<reference evidence="4" key="1">
    <citation type="journal article" date="2004" name="Gen. Comp. Endocrinol.">
        <title>Molecular cloning and characterization of an amphibian progesterone receptor from Rana dybowskii.</title>
        <authorList>
            <person name="Wang L."/>
            <person name="Sanyal S."/>
            <person name="Oh D.Y."/>
            <person name="Kim J.-Y."/>
            <person name="Ju J.W."/>
            <person name="Song K.-H."/>
            <person name="Kim J.W."/>
            <person name="Kwon H.B."/>
            <person name="Choi H.-S."/>
        </authorList>
    </citation>
    <scope>NUCLEOTIDE SEQUENCE [MRNA]</scope>
    <scope>FUNCTION</scope>
    <scope>DNA-BINDING</scope>
    <scope>TISSUE SPECIFICITY</scope>
    <source>
        <tissue evidence="3">Testis</tissue>
    </source>
</reference>
<comment type="function">
    <text evidence="3">The steroid hormones and their receptors are involved in the regulation of eukaryotic gene expression and affect cellular proliferation and differentiation in target tissues.</text>
</comment>
<comment type="subcellular location">
    <subcellularLocation>
        <location>Nucleus</location>
    </subcellularLocation>
    <text>Predominantly nuclear.</text>
</comment>
<comment type="tissue specificity">
    <text evidence="3">Expressed in all tissues examined: highly expressed in testis and brain. Also expressed in heart, lung, liver, kidney, stomach and small intestine.</text>
</comment>
<comment type="domain">
    <text>Composed of three domains: a modulating N-terminal domain, a DNA-binding domain and a C-terminal ligand-binding domain.</text>
</comment>
<comment type="similarity">
    <text evidence="4">Belongs to the nuclear hormone receptor family. NR3 subfamily.</text>
</comment>
<sequence length="711" mass="80126">MEDKSKQCLQDPMCLGIESKHYIGSHGRHQVDFLEEMVDPGEISLDSLIFQRPEDEVSYQKKGGGPASSDNNELEKVLDSILDTSSSSHLHPWDDYVIPEFQEISVTSASSTKTLGDLTTDKKEAGVWTGTTAVENKSIPSLVPKEQDTLEYSIEGQLEGKGRRHGVLASRHPTLPPDGKMPMLPGSAVYLPGQPRHIEEDNDNYDQKHLSPYPCHSSCSHHDGKIKQEDSLYAEYGMPSSNPATPGPDPSLEYICKSETAAAYDNFRSTLGKSSDKAIPVLPTSSTTSQNLYQPLSLNDHQQNAYQSGTVNDAFVPQMHLSYEQYSRPDDPDQSSQYGFDALPRKICLICSDEASGCHYGALTCGSCKVFFKRAIEGQHNYLCAGRNDCIGDKIRRKNCPSCRLKKCCQAGMVLGGRKFKKYNRLKPGRELDRIATSSPMECQQALTRRVSNSSAQEVQYFPELLQILQSIEPEVLYAGYDYTKPETPSALLCSLNQLCERQLLCVVKWSKSLPGFRNMHIDDQIILLQYSWMSLMVFAMGWRSYKHVSGQMLYFAPDLVLNERRMKDSSFYSLCIAMRQLPQEFVKLQISQEEFLCMKALLLLNTIPLEGLKSQSYFDEMRSNYIRELAKAISLRHKGVVASSQRFYHLTKVLDSMHELVKQLHLYCLNTFLQSRALSVEFPEMMTEVISAQLPKILAGMAKPLIFHKK</sequence>
<keyword id="KW-0238">DNA-binding</keyword>
<keyword id="KW-0446">Lipid-binding</keyword>
<keyword id="KW-0479">Metal-binding</keyword>
<keyword id="KW-0539">Nucleus</keyword>
<keyword id="KW-0675">Receptor</keyword>
<keyword id="KW-0754">Steroid-binding</keyword>
<keyword id="KW-0804">Transcription</keyword>
<keyword id="KW-0805">Transcription regulation</keyword>
<keyword id="KW-0862">Zinc</keyword>
<keyword id="KW-0863">Zinc-finger</keyword>
<accession>Q8AYI2</accession>
<organism evidence="5">
    <name type="scientific">Rana dybowskii</name>
    <name type="common">Dybovsky's frog</name>
    <name type="synonym">Korean brown frog</name>
    <dbReference type="NCBI Taxonomy" id="71582"/>
    <lineage>
        <taxon>Eukaryota</taxon>
        <taxon>Metazoa</taxon>
        <taxon>Chordata</taxon>
        <taxon>Craniata</taxon>
        <taxon>Vertebrata</taxon>
        <taxon>Euteleostomi</taxon>
        <taxon>Amphibia</taxon>
        <taxon>Batrachia</taxon>
        <taxon>Anura</taxon>
        <taxon>Neobatrachia</taxon>
        <taxon>Ranoidea</taxon>
        <taxon>Ranidae</taxon>
        <taxon>Rana</taxon>
        <taxon>Rana</taxon>
    </lineage>
</organism>
<name>PRGR_RANDY</name>
<proteinExistence type="evidence at protein level"/>
<gene>
    <name type="primary">pgr</name>
    <name type="synonym">nr3c3</name>
    <name type="synonym">pr</name>
</gene>
<evidence type="ECO:0000255" key="1">
    <source>
        <dbReference type="PROSITE-ProRule" id="PRU00407"/>
    </source>
</evidence>
<evidence type="ECO:0000255" key="2">
    <source>
        <dbReference type="PROSITE-ProRule" id="PRU01189"/>
    </source>
</evidence>
<evidence type="ECO:0000269" key="3">
    <source>
    </source>
</evidence>
<evidence type="ECO:0000305" key="4"/>
<evidence type="ECO:0000312" key="5">
    <source>
        <dbReference type="EMBL" id="AAN63590.1"/>
    </source>
</evidence>